<name>RL19_BORA1</name>
<accession>Q2L2Q1</accession>
<feature type="chain" id="PRO_0000252498" description="Large ribosomal subunit protein bL19">
    <location>
        <begin position="1"/>
        <end position="129"/>
    </location>
</feature>
<protein>
    <recommendedName>
        <fullName evidence="1">Large ribosomal subunit protein bL19</fullName>
    </recommendedName>
    <alternativeName>
        <fullName evidence="2">50S ribosomal protein L19</fullName>
    </alternativeName>
</protein>
<organism>
    <name type="scientific">Bordetella avium (strain 197N)</name>
    <dbReference type="NCBI Taxonomy" id="360910"/>
    <lineage>
        <taxon>Bacteria</taxon>
        <taxon>Pseudomonadati</taxon>
        <taxon>Pseudomonadota</taxon>
        <taxon>Betaproteobacteria</taxon>
        <taxon>Burkholderiales</taxon>
        <taxon>Alcaligenaceae</taxon>
        <taxon>Bordetella</taxon>
    </lineage>
</organism>
<reference key="1">
    <citation type="journal article" date="2006" name="J. Bacteriol.">
        <title>Comparison of the genome sequence of the poultry pathogen Bordetella avium with those of B. bronchiseptica, B. pertussis, and B. parapertussis reveals extensive diversity in surface structures associated with host interaction.</title>
        <authorList>
            <person name="Sebaihia M."/>
            <person name="Preston A."/>
            <person name="Maskell D.J."/>
            <person name="Kuzmiak H."/>
            <person name="Connell T.D."/>
            <person name="King N.D."/>
            <person name="Orndorff P.E."/>
            <person name="Miyamoto D.M."/>
            <person name="Thomson N.R."/>
            <person name="Harris D."/>
            <person name="Goble A."/>
            <person name="Lord A."/>
            <person name="Murphy L."/>
            <person name="Quail M.A."/>
            <person name="Rutter S."/>
            <person name="Squares R."/>
            <person name="Squares S."/>
            <person name="Woodward J."/>
            <person name="Parkhill J."/>
            <person name="Temple L.M."/>
        </authorList>
    </citation>
    <scope>NUCLEOTIDE SEQUENCE [LARGE SCALE GENOMIC DNA]</scope>
    <source>
        <strain>197N</strain>
    </source>
</reference>
<comment type="function">
    <text evidence="1">This protein is located at the 30S-50S ribosomal subunit interface and may play a role in the structure and function of the aminoacyl-tRNA binding site.</text>
</comment>
<comment type="similarity">
    <text evidence="1">Belongs to the bacterial ribosomal protein bL19 family.</text>
</comment>
<keyword id="KW-1185">Reference proteome</keyword>
<keyword id="KW-0687">Ribonucleoprotein</keyword>
<keyword id="KW-0689">Ribosomal protein</keyword>
<sequence length="129" mass="14480">MNLIALLEQEEIKRLTGDKPVTEFAPGDTVIVSVNVVEGTRKRVQAFEGVVIAKRNRGLNSAFIVRKISSGEAVERTFQLYSPQIASIEVKRRGDVRRAKLYYLRNRSGKSARIKEKLVSKQANHQAQG</sequence>
<dbReference type="EMBL" id="AM167904">
    <property type="protein sequence ID" value="CAJ48982.1"/>
    <property type="molecule type" value="Genomic_DNA"/>
</dbReference>
<dbReference type="RefSeq" id="WP_012417054.1">
    <property type="nucleotide sequence ID" value="NC_010645.1"/>
</dbReference>
<dbReference type="SMR" id="Q2L2Q1"/>
<dbReference type="STRING" id="360910.BAV1373"/>
<dbReference type="GeneID" id="92935502"/>
<dbReference type="KEGG" id="bav:BAV1373"/>
<dbReference type="eggNOG" id="COG0335">
    <property type="taxonomic scope" value="Bacteria"/>
</dbReference>
<dbReference type="HOGENOM" id="CLU_103507_1_0_4"/>
<dbReference type="OrthoDB" id="9803541at2"/>
<dbReference type="Proteomes" id="UP000001977">
    <property type="component" value="Chromosome"/>
</dbReference>
<dbReference type="GO" id="GO:0022625">
    <property type="term" value="C:cytosolic large ribosomal subunit"/>
    <property type="evidence" value="ECO:0007669"/>
    <property type="project" value="TreeGrafter"/>
</dbReference>
<dbReference type="GO" id="GO:0003735">
    <property type="term" value="F:structural constituent of ribosome"/>
    <property type="evidence" value="ECO:0007669"/>
    <property type="project" value="InterPro"/>
</dbReference>
<dbReference type="GO" id="GO:0006412">
    <property type="term" value="P:translation"/>
    <property type="evidence" value="ECO:0007669"/>
    <property type="project" value="UniProtKB-UniRule"/>
</dbReference>
<dbReference type="FunFam" id="2.30.30.790:FF:000001">
    <property type="entry name" value="50S ribosomal protein L19"/>
    <property type="match status" value="1"/>
</dbReference>
<dbReference type="Gene3D" id="2.30.30.790">
    <property type="match status" value="1"/>
</dbReference>
<dbReference type="HAMAP" id="MF_00402">
    <property type="entry name" value="Ribosomal_bL19"/>
    <property type="match status" value="1"/>
</dbReference>
<dbReference type="InterPro" id="IPR001857">
    <property type="entry name" value="Ribosomal_bL19"/>
</dbReference>
<dbReference type="InterPro" id="IPR018257">
    <property type="entry name" value="Ribosomal_bL19_CS"/>
</dbReference>
<dbReference type="InterPro" id="IPR038657">
    <property type="entry name" value="Ribosomal_bL19_sf"/>
</dbReference>
<dbReference type="InterPro" id="IPR008991">
    <property type="entry name" value="Translation_prot_SH3-like_sf"/>
</dbReference>
<dbReference type="NCBIfam" id="TIGR01024">
    <property type="entry name" value="rplS_bact"/>
    <property type="match status" value="1"/>
</dbReference>
<dbReference type="PANTHER" id="PTHR15680:SF9">
    <property type="entry name" value="LARGE RIBOSOMAL SUBUNIT PROTEIN BL19M"/>
    <property type="match status" value="1"/>
</dbReference>
<dbReference type="PANTHER" id="PTHR15680">
    <property type="entry name" value="RIBOSOMAL PROTEIN L19"/>
    <property type="match status" value="1"/>
</dbReference>
<dbReference type="Pfam" id="PF01245">
    <property type="entry name" value="Ribosomal_L19"/>
    <property type="match status" value="1"/>
</dbReference>
<dbReference type="PIRSF" id="PIRSF002191">
    <property type="entry name" value="Ribosomal_L19"/>
    <property type="match status" value="1"/>
</dbReference>
<dbReference type="PRINTS" id="PR00061">
    <property type="entry name" value="RIBOSOMALL19"/>
</dbReference>
<dbReference type="SUPFAM" id="SSF50104">
    <property type="entry name" value="Translation proteins SH3-like domain"/>
    <property type="match status" value="1"/>
</dbReference>
<dbReference type="PROSITE" id="PS01015">
    <property type="entry name" value="RIBOSOMAL_L19"/>
    <property type="match status" value="1"/>
</dbReference>
<evidence type="ECO:0000255" key="1">
    <source>
        <dbReference type="HAMAP-Rule" id="MF_00402"/>
    </source>
</evidence>
<evidence type="ECO:0000305" key="2"/>
<gene>
    <name evidence="1" type="primary">rplS</name>
    <name type="ordered locus">BAV1373</name>
</gene>
<proteinExistence type="inferred from homology"/>